<reference key="1">
    <citation type="journal article" date="1990" name="Plant Mol. Biol.">
        <title>Four tightly linked rab genes are differentially expressed in rice.</title>
        <authorList>
            <person name="Yamaguchi-Shinozaki K."/>
            <person name="Mundy J."/>
            <person name="Chua N.-H."/>
        </authorList>
    </citation>
    <scope>NUCLEOTIDE SEQUENCE [GENOMIC DNA]</scope>
    <scope>INDUCTION</scope>
    <source>
        <strain>cv. IR36</strain>
        <tissue>Seed</tissue>
    </source>
</reference>
<reference key="2">
    <citation type="journal article" date="2005" name="PLoS Biol.">
        <title>The genomes of Oryza sativa: a history of duplications.</title>
        <authorList>
            <person name="Yu J."/>
            <person name="Wang J."/>
            <person name="Lin W."/>
            <person name="Li S."/>
            <person name="Li H."/>
            <person name="Zhou J."/>
            <person name="Ni P."/>
            <person name="Dong W."/>
            <person name="Hu S."/>
            <person name="Zeng C."/>
            <person name="Zhang J."/>
            <person name="Zhang Y."/>
            <person name="Li R."/>
            <person name="Xu Z."/>
            <person name="Li S."/>
            <person name="Li X."/>
            <person name="Zheng H."/>
            <person name="Cong L."/>
            <person name="Lin L."/>
            <person name="Yin J."/>
            <person name="Geng J."/>
            <person name="Li G."/>
            <person name="Shi J."/>
            <person name="Liu J."/>
            <person name="Lv H."/>
            <person name="Li J."/>
            <person name="Wang J."/>
            <person name="Deng Y."/>
            <person name="Ran L."/>
            <person name="Shi X."/>
            <person name="Wang X."/>
            <person name="Wu Q."/>
            <person name="Li C."/>
            <person name="Ren X."/>
            <person name="Wang J."/>
            <person name="Wang X."/>
            <person name="Li D."/>
            <person name="Liu D."/>
            <person name="Zhang X."/>
            <person name="Ji Z."/>
            <person name="Zhao W."/>
            <person name="Sun Y."/>
            <person name="Zhang Z."/>
            <person name="Bao J."/>
            <person name="Han Y."/>
            <person name="Dong L."/>
            <person name="Ji J."/>
            <person name="Chen P."/>
            <person name="Wu S."/>
            <person name="Liu J."/>
            <person name="Xiao Y."/>
            <person name="Bu D."/>
            <person name="Tan J."/>
            <person name="Yang L."/>
            <person name="Ye C."/>
            <person name="Zhang J."/>
            <person name="Xu J."/>
            <person name="Zhou Y."/>
            <person name="Yu Y."/>
            <person name="Zhang B."/>
            <person name="Zhuang S."/>
            <person name="Wei H."/>
            <person name="Liu B."/>
            <person name="Lei M."/>
            <person name="Yu H."/>
            <person name="Li Y."/>
            <person name="Xu H."/>
            <person name="Wei S."/>
            <person name="He X."/>
            <person name="Fang L."/>
            <person name="Zhang Z."/>
            <person name="Zhang Y."/>
            <person name="Huang X."/>
            <person name="Su Z."/>
            <person name="Tong W."/>
            <person name="Li J."/>
            <person name="Tong Z."/>
            <person name="Li S."/>
            <person name="Ye J."/>
            <person name="Wang L."/>
            <person name="Fang L."/>
            <person name="Lei T."/>
            <person name="Chen C.-S."/>
            <person name="Chen H.-C."/>
            <person name="Xu Z."/>
            <person name="Li H."/>
            <person name="Huang H."/>
            <person name="Zhang F."/>
            <person name="Xu H."/>
            <person name="Li N."/>
            <person name="Zhao C."/>
            <person name="Li S."/>
            <person name="Dong L."/>
            <person name="Huang Y."/>
            <person name="Li L."/>
            <person name="Xi Y."/>
            <person name="Qi Q."/>
            <person name="Li W."/>
            <person name="Zhang B."/>
            <person name="Hu W."/>
            <person name="Zhang Y."/>
            <person name="Tian X."/>
            <person name="Jiao Y."/>
            <person name="Liang X."/>
            <person name="Jin J."/>
            <person name="Gao L."/>
            <person name="Zheng W."/>
            <person name="Hao B."/>
            <person name="Liu S.-M."/>
            <person name="Wang W."/>
            <person name="Yuan L."/>
            <person name="Cao M."/>
            <person name="McDermott J."/>
            <person name="Samudrala R."/>
            <person name="Wang J."/>
            <person name="Wong G.K.-S."/>
            <person name="Yang H."/>
        </authorList>
    </citation>
    <scope>NUCLEOTIDE SEQUENCE [LARGE SCALE GENOMIC DNA]</scope>
    <source>
        <strain>cv. 93-11</strain>
    </source>
</reference>
<evidence type="ECO:0000256" key="1">
    <source>
        <dbReference type="SAM" id="MobiDB-lite"/>
    </source>
</evidence>
<evidence type="ECO:0000269" key="2">
    <source>
    </source>
</evidence>
<evidence type="ECO:0000305" key="3"/>
<dbReference type="EMBL" id="X52424">
    <property type="status" value="NOT_ANNOTATED_CDS"/>
    <property type="molecule type" value="Genomic_DNA"/>
</dbReference>
<dbReference type="EMBL" id="CM000136">
    <property type="protein sequence ID" value="EAY80808.1"/>
    <property type="molecule type" value="Genomic_DNA"/>
</dbReference>
<dbReference type="PIR" id="S11848">
    <property type="entry name" value="S11848"/>
</dbReference>
<dbReference type="STRING" id="39946.A2ZDX4"/>
<dbReference type="EnsemblPlants" id="BGIOSGA034054-TA">
    <property type="protein sequence ID" value="BGIOSGA034054-PA"/>
    <property type="gene ID" value="BGIOSGA034054"/>
</dbReference>
<dbReference type="EnsemblPlants" id="OsGoSa_11g0012840.01">
    <property type="protein sequence ID" value="OsGoSa_11g0012840.01"/>
    <property type="gene ID" value="OsGoSa_11g0012840"/>
</dbReference>
<dbReference type="EnsemblPlants" id="OsKYG_11g0013210.01">
    <property type="protein sequence ID" value="OsKYG_11g0013210.01"/>
    <property type="gene ID" value="OsKYG_11g0013210"/>
</dbReference>
<dbReference type="EnsemblPlants" id="OsLaMu_11g0013030.01">
    <property type="protein sequence ID" value="OsLaMu_11g0013030.01"/>
    <property type="gene ID" value="OsLaMu_11g0013030"/>
</dbReference>
<dbReference type="EnsemblPlants" id="OsLima_11g0013120.01">
    <property type="protein sequence ID" value="OsLima_11g0013120.01"/>
    <property type="gene ID" value="OsLima_11g0013120"/>
</dbReference>
<dbReference type="EnsemblPlants" id="OsLiXu_Ung0074740.04">
    <property type="protein sequence ID" value="OsLiXu_Ung0074740.04"/>
    <property type="gene ID" value="OsLiXu_Ung0074740"/>
</dbReference>
<dbReference type="EnsemblPlants" id="OsMH63_11G013480_01">
    <property type="protein sequence ID" value="OsMH63_11G013480_01"/>
    <property type="gene ID" value="OsMH63_11G013480"/>
</dbReference>
<dbReference type="EnsemblPlants" id="OsPr106_11g0013110.04">
    <property type="protein sequence ID" value="OsPr106_11g0013110.04"/>
    <property type="gene ID" value="OsPr106_11g0013110"/>
</dbReference>
<dbReference type="Gramene" id="BGIOSGA034054-TA">
    <property type="protein sequence ID" value="BGIOSGA034054-PA"/>
    <property type="gene ID" value="BGIOSGA034054"/>
</dbReference>
<dbReference type="Gramene" id="OsGoSa_11g0012840.01">
    <property type="protein sequence ID" value="OsGoSa_11g0012840.01"/>
    <property type="gene ID" value="OsGoSa_11g0012840"/>
</dbReference>
<dbReference type="Gramene" id="OsKYG_11g0013210.01">
    <property type="protein sequence ID" value="OsKYG_11g0013210.01"/>
    <property type="gene ID" value="OsKYG_11g0013210"/>
</dbReference>
<dbReference type="Gramene" id="OsLaMu_11g0013030.01">
    <property type="protein sequence ID" value="OsLaMu_11g0013030.01"/>
    <property type="gene ID" value="OsLaMu_11g0013030"/>
</dbReference>
<dbReference type="Gramene" id="OsLima_11g0013120.01">
    <property type="protein sequence ID" value="OsLima_11g0013120.01"/>
    <property type="gene ID" value="OsLima_11g0013120"/>
</dbReference>
<dbReference type="Gramene" id="OsLiXu_Ung0074740.04">
    <property type="protein sequence ID" value="OsLiXu_Ung0074740.04"/>
    <property type="gene ID" value="OsLiXu_Ung0074740"/>
</dbReference>
<dbReference type="Gramene" id="OsMH63_11G013480_01">
    <property type="protein sequence ID" value="OsMH63_11G013480_01"/>
    <property type="gene ID" value="OsMH63_11G013480"/>
</dbReference>
<dbReference type="Gramene" id="OsPr106_11g0013110.04">
    <property type="protein sequence ID" value="OsPr106_11g0013110.04"/>
    <property type="gene ID" value="OsPr106_11g0013110"/>
</dbReference>
<dbReference type="HOGENOM" id="CLU_060028_2_0_1"/>
<dbReference type="OMA" id="MKDDHKT"/>
<dbReference type="OrthoDB" id="676153at2759"/>
<dbReference type="Proteomes" id="UP000007015">
    <property type="component" value="Chromosome 11"/>
</dbReference>
<dbReference type="GO" id="GO:0005829">
    <property type="term" value="C:cytosol"/>
    <property type="evidence" value="ECO:0007669"/>
    <property type="project" value="TreeGrafter"/>
</dbReference>
<dbReference type="GO" id="GO:0009631">
    <property type="term" value="P:cold acclimation"/>
    <property type="evidence" value="ECO:0007669"/>
    <property type="project" value="TreeGrafter"/>
</dbReference>
<dbReference type="GO" id="GO:0009737">
    <property type="term" value="P:response to abscisic acid"/>
    <property type="evidence" value="ECO:0007669"/>
    <property type="project" value="TreeGrafter"/>
</dbReference>
<dbReference type="GO" id="GO:0009414">
    <property type="term" value="P:response to water deprivation"/>
    <property type="evidence" value="ECO:0007669"/>
    <property type="project" value="TreeGrafter"/>
</dbReference>
<dbReference type="InterPro" id="IPR000167">
    <property type="entry name" value="Dehydrin"/>
</dbReference>
<dbReference type="InterPro" id="IPR030513">
    <property type="entry name" value="Dehydrin_CS"/>
</dbReference>
<dbReference type="PANTHER" id="PTHR33346:SF37">
    <property type="entry name" value="DEHYDRIN RAB16D"/>
    <property type="match status" value="1"/>
</dbReference>
<dbReference type="PANTHER" id="PTHR33346">
    <property type="entry name" value="DEHYDRIN XERO 2-RELATED"/>
    <property type="match status" value="1"/>
</dbReference>
<dbReference type="Pfam" id="PF00257">
    <property type="entry name" value="Dehydrin"/>
    <property type="match status" value="1"/>
</dbReference>
<dbReference type="PROSITE" id="PS00315">
    <property type="entry name" value="DEHYDRIN_1"/>
    <property type="match status" value="1"/>
</dbReference>
<dbReference type="PROSITE" id="PS00823">
    <property type="entry name" value="DEHYDRIN_2"/>
    <property type="match status" value="2"/>
</dbReference>
<comment type="induction">
    <text evidence="2">By abscisic acid (ABA) and water stress.</text>
</comment>
<comment type="similarity">
    <text evidence="3">Belongs to the plant dehydrin family.</text>
</comment>
<organism>
    <name type="scientific">Oryza sativa subsp. indica</name>
    <name type="common">Rice</name>
    <dbReference type="NCBI Taxonomy" id="39946"/>
    <lineage>
        <taxon>Eukaryota</taxon>
        <taxon>Viridiplantae</taxon>
        <taxon>Streptophyta</taxon>
        <taxon>Embryophyta</taxon>
        <taxon>Tracheophyta</taxon>
        <taxon>Spermatophyta</taxon>
        <taxon>Magnoliopsida</taxon>
        <taxon>Liliopsida</taxon>
        <taxon>Poales</taxon>
        <taxon>Poaceae</taxon>
        <taxon>BOP clade</taxon>
        <taxon>Oryzoideae</taxon>
        <taxon>Oryzeae</taxon>
        <taxon>Oryzinae</taxon>
        <taxon>Oryza</taxon>
        <taxon>Oryza sativa</taxon>
    </lineage>
</organism>
<gene>
    <name type="primary">RAB16D</name>
    <name type="ORF">OsI_034767</name>
</gene>
<name>DH16D_ORYSI</name>
<proteinExistence type="evidence at transcript level"/>
<keyword id="KW-1185">Reference proteome</keyword>
<keyword id="KW-0346">Stress response</keyword>
<accession>A2ZDX4</accession>
<accession>P22913</accession>
<accession>Q53LA0</accession>
<feature type="chain" id="PRO_0000295015" description="Dehydrin Rab16D">
    <location>
        <begin position="1"/>
        <end position="151"/>
    </location>
</feature>
<feature type="region of interest" description="Disordered" evidence="1">
    <location>
        <begin position="1"/>
        <end position="138"/>
    </location>
</feature>
<feature type="compositionally biased region" description="Basic and acidic residues" evidence="1">
    <location>
        <begin position="39"/>
        <end position="51"/>
    </location>
</feature>
<feature type="compositionally biased region" description="Low complexity" evidence="1">
    <location>
        <begin position="90"/>
        <end position="105"/>
    </location>
</feature>
<feature type="compositionally biased region" description="Low complexity" evidence="1">
    <location>
        <begin position="117"/>
        <end position="132"/>
    </location>
</feature>
<feature type="sequence conflict" description="In Ref. 1; X52424." evidence="3" ref="1">
    <original>H</original>
    <variation>R</variation>
    <location>
        <position position="122"/>
    </location>
</feature>
<protein>
    <recommendedName>
        <fullName>Dehydrin Rab16D</fullName>
    </recommendedName>
</protein>
<sequence length="151" mass="15552">MEYQGQHGGHASSRADEHGNPAVTTGNAPTGMGAGHIQEPAREDKKTDGVLRRSGSSSSSSSSEDDGMGGRRKKGIKEKIKEKLPGGNKGNNQQQQQEHTTTTTGGAYGPQGHDTKIATGAHGGTAATTADAGGEKKGIVDKIKEKLPGQH</sequence>